<sequence length="375" mass="42049">MQCALYDAGRCRSCQWITQSVNEQLSAKTADLHRLLAGLPVEQWCAPIGGPEQHFRNKAKMVVSGSVEKPLFGMLHRDGTPVDLCGCPLYPASFAPVFSALKPFIARAGLTPYNVARKRGELKYLLLTESQFDGGMMLRFVLRSETKLTQLRAALPWLRAQLPQLRVITANIQPVHMAIMEGETEIYLTDQQALAERFNDVPLWIRPQSFFQTNPTVASRLYATARDWVGQLPVRHMWDLFCGVGGFGLHCATPQMQLTGIEIAPEAIACAKQSAAELGLTRLHFQALDSTQFATAQGETPDLVLVNPPRRGIGKPLCDYLAQMAPRFIIYSSCNAQTMAQDIRHLPNYRIQRVQLFDMFPHTAHYEVLALLRRL</sequence>
<comment type="function">
    <text evidence="1">Catalyzes the formation of 5-methyl-uridine at position 747 (m5U747) in 23S rRNA.</text>
</comment>
<comment type="catalytic activity">
    <reaction evidence="1">
        <text>uridine(747) in 23S rRNA + S-adenosyl-L-methionine = 5-methyluridine(747) in 23S rRNA + S-adenosyl-L-homocysteine + H(+)</text>
        <dbReference type="Rhea" id="RHEA:42628"/>
        <dbReference type="Rhea" id="RHEA-COMP:10154"/>
        <dbReference type="Rhea" id="RHEA-COMP:10155"/>
        <dbReference type="ChEBI" id="CHEBI:15378"/>
        <dbReference type="ChEBI" id="CHEBI:57856"/>
        <dbReference type="ChEBI" id="CHEBI:59789"/>
        <dbReference type="ChEBI" id="CHEBI:65315"/>
        <dbReference type="ChEBI" id="CHEBI:74447"/>
        <dbReference type="EC" id="2.1.1.189"/>
    </reaction>
</comment>
<comment type="similarity">
    <text evidence="1">Belongs to the class I-like SAM-binding methyltransferase superfamily. RNA M5U methyltransferase family. RlmC subfamily.</text>
</comment>
<accession>B5QYK4</accession>
<proteinExistence type="inferred from homology"/>
<keyword id="KW-0004">4Fe-4S</keyword>
<keyword id="KW-0408">Iron</keyword>
<keyword id="KW-0411">Iron-sulfur</keyword>
<keyword id="KW-0479">Metal-binding</keyword>
<keyword id="KW-0489">Methyltransferase</keyword>
<keyword id="KW-0698">rRNA processing</keyword>
<keyword id="KW-0949">S-adenosyl-L-methionine</keyword>
<keyword id="KW-0808">Transferase</keyword>
<protein>
    <recommendedName>
        <fullName evidence="1">23S rRNA (uracil(747)-C(5))-methyltransferase RlmC</fullName>
        <ecNumber evidence="1">2.1.1.189</ecNumber>
    </recommendedName>
    <alternativeName>
        <fullName evidence="1">23S rRNA(m5U747)-methyltransferase</fullName>
    </alternativeName>
</protein>
<name>RLMC_SALEP</name>
<gene>
    <name evidence="1" type="primary">rlmC</name>
    <name type="synonym">rumB</name>
    <name type="ordered locus">SEN0828</name>
</gene>
<dbReference type="EC" id="2.1.1.189" evidence="1"/>
<dbReference type="EMBL" id="AM933172">
    <property type="protein sequence ID" value="CAR32411.1"/>
    <property type="molecule type" value="Genomic_DNA"/>
</dbReference>
<dbReference type="RefSeq" id="WP_001149775.1">
    <property type="nucleotide sequence ID" value="NC_011294.1"/>
</dbReference>
<dbReference type="SMR" id="B5QYK4"/>
<dbReference type="KEGG" id="set:SEN0828"/>
<dbReference type="HOGENOM" id="CLU_014689_0_0_6"/>
<dbReference type="Proteomes" id="UP000000613">
    <property type="component" value="Chromosome"/>
</dbReference>
<dbReference type="GO" id="GO:0051539">
    <property type="term" value="F:4 iron, 4 sulfur cluster binding"/>
    <property type="evidence" value="ECO:0007669"/>
    <property type="project" value="UniProtKB-KW"/>
</dbReference>
<dbReference type="GO" id="GO:0005506">
    <property type="term" value="F:iron ion binding"/>
    <property type="evidence" value="ECO:0007669"/>
    <property type="project" value="UniProtKB-UniRule"/>
</dbReference>
<dbReference type="GO" id="GO:0070041">
    <property type="term" value="F:rRNA (uridine-C5-)-methyltransferase activity"/>
    <property type="evidence" value="ECO:0007669"/>
    <property type="project" value="UniProtKB-UniRule"/>
</dbReference>
<dbReference type="GO" id="GO:0070475">
    <property type="term" value="P:rRNA base methylation"/>
    <property type="evidence" value="ECO:0007669"/>
    <property type="project" value="TreeGrafter"/>
</dbReference>
<dbReference type="CDD" id="cd02440">
    <property type="entry name" value="AdoMet_MTases"/>
    <property type="match status" value="1"/>
</dbReference>
<dbReference type="FunFam" id="2.40.50.1070:FF:000002">
    <property type="entry name" value="23S rRNA (uracil(747)-C(5))-methyltransferase RlmC"/>
    <property type="match status" value="1"/>
</dbReference>
<dbReference type="FunFam" id="3.40.50.150:FF:000049">
    <property type="entry name" value="23S rRNA (uracil(747)-C(5))-methyltransferase RlmC"/>
    <property type="match status" value="1"/>
</dbReference>
<dbReference type="Gene3D" id="2.40.50.1070">
    <property type="match status" value="1"/>
</dbReference>
<dbReference type="Gene3D" id="3.40.50.150">
    <property type="entry name" value="Vaccinia Virus protein VP39"/>
    <property type="match status" value="1"/>
</dbReference>
<dbReference type="HAMAP" id="MF_01012">
    <property type="entry name" value="23SrRNA_methyltr_RlmC"/>
    <property type="match status" value="1"/>
</dbReference>
<dbReference type="InterPro" id="IPR011825">
    <property type="entry name" value="23SrRNA_MeTrfase_RlmC"/>
</dbReference>
<dbReference type="InterPro" id="IPR030390">
    <property type="entry name" value="MeTrfase_TrmA_AS"/>
</dbReference>
<dbReference type="InterPro" id="IPR030391">
    <property type="entry name" value="MeTrfase_TrmA_CS"/>
</dbReference>
<dbReference type="InterPro" id="IPR029063">
    <property type="entry name" value="SAM-dependent_MTases_sf"/>
</dbReference>
<dbReference type="InterPro" id="IPR010280">
    <property type="entry name" value="U5_MeTrfase_fam"/>
</dbReference>
<dbReference type="NCBIfam" id="TIGR02085">
    <property type="entry name" value="meth_trns_rumB"/>
    <property type="match status" value="1"/>
</dbReference>
<dbReference type="PANTHER" id="PTHR11061">
    <property type="entry name" value="RNA M5U METHYLTRANSFERASE"/>
    <property type="match status" value="1"/>
</dbReference>
<dbReference type="PANTHER" id="PTHR11061:SF30">
    <property type="entry name" value="TRNA (URACIL(54)-C(5))-METHYLTRANSFERASE"/>
    <property type="match status" value="1"/>
</dbReference>
<dbReference type="Pfam" id="PF05958">
    <property type="entry name" value="tRNA_U5-meth_tr"/>
    <property type="match status" value="1"/>
</dbReference>
<dbReference type="SUPFAM" id="SSF53335">
    <property type="entry name" value="S-adenosyl-L-methionine-dependent methyltransferases"/>
    <property type="match status" value="1"/>
</dbReference>
<dbReference type="PROSITE" id="PS51687">
    <property type="entry name" value="SAM_MT_RNA_M5U"/>
    <property type="match status" value="1"/>
</dbReference>
<dbReference type="PROSITE" id="PS01230">
    <property type="entry name" value="TRMA_1"/>
    <property type="match status" value="1"/>
</dbReference>
<dbReference type="PROSITE" id="PS01231">
    <property type="entry name" value="TRMA_2"/>
    <property type="match status" value="1"/>
</dbReference>
<organism>
    <name type="scientific">Salmonella enteritidis PT4 (strain P125109)</name>
    <dbReference type="NCBI Taxonomy" id="550537"/>
    <lineage>
        <taxon>Bacteria</taxon>
        <taxon>Pseudomonadati</taxon>
        <taxon>Pseudomonadota</taxon>
        <taxon>Gammaproteobacteria</taxon>
        <taxon>Enterobacterales</taxon>
        <taxon>Enterobacteriaceae</taxon>
        <taxon>Salmonella</taxon>
    </lineage>
</organism>
<reference key="1">
    <citation type="journal article" date="2008" name="Genome Res.">
        <title>Comparative genome analysis of Salmonella enteritidis PT4 and Salmonella gallinarum 287/91 provides insights into evolutionary and host adaptation pathways.</title>
        <authorList>
            <person name="Thomson N.R."/>
            <person name="Clayton D.J."/>
            <person name="Windhorst D."/>
            <person name="Vernikos G."/>
            <person name="Davidson S."/>
            <person name="Churcher C."/>
            <person name="Quail M.A."/>
            <person name="Stevens M."/>
            <person name="Jones M.A."/>
            <person name="Watson M."/>
            <person name="Barron A."/>
            <person name="Layton A."/>
            <person name="Pickard D."/>
            <person name="Kingsley R.A."/>
            <person name="Bignell A."/>
            <person name="Clark L."/>
            <person name="Harris B."/>
            <person name="Ormond D."/>
            <person name="Abdellah Z."/>
            <person name="Brooks K."/>
            <person name="Cherevach I."/>
            <person name="Chillingworth T."/>
            <person name="Woodward J."/>
            <person name="Norberczak H."/>
            <person name="Lord A."/>
            <person name="Arrowsmith C."/>
            <person name="Jagels K."/>
            <person name="Moule S."/>
            <person name="Mungall K."/>
            <person name="Saunders M."/>
            <person name="Whitehead S."/>
            <person name="Chabalgoity J.A."/>
            <person name="Maskell D."/>
            <person name="Humphreys T."/>
            <person name="Roberts M."/>
            <person name="Barrow P.A."/>
            <person name="Dougan G."/>
            <person name="Parkhill J."/>
        </authorList>
    </citation>
    <scope>NUCLEOTIDE SEQUENCE [LARGE SCALE GENOMIC DNA]</scope>
    <source>
        <strain>P125109</strain>
    </source>
</reference>
<evidence type="ECO:0000255" key="1">
    <source>
        <dbReference type="HAMAP-Rule" id="MF_01012"/>
    </source>
</evidence>
<feature type="chain" id="PRO_1000200874" description="23S rRNA (uracil(747)-C(5))-methyltransferase RlmC">
    <location>
        <begin position="1"/>
        <end position="375"/>
    </location>
</feature>
<feature type="active site" description="Nucleophile" evidence="1">
    <location>
        <position position="334"/>
    </location>
</feature>
<feature type="binding site" evidence="1">
    <location>
        <position position="3"/>
    </location>
    <ligand>
        <name>[4Fe-4S] cluster</name>
        <dbReference type="ChEBI" id="CHEBI:49883"/>
    </ligand>
</feature>
<feature type="binding site" evidence="1">
    <location>
        <position position="11"/>
    </location>
    <ligand>
        <name>[4Fe-4S] cluster</name>
        <dbReference type="ChEBI" id="CHEBI:49883"/>
    </ligand>
</feature>
<feature type="binding site" evidence="1">
    <location>
        <position position="14"/>
    </location>
    <ligand>
        <name>[4Fe-4S] cluster</name>
        <dbReference type="ChEBI" id="CHEBI:49883"/>
    </ligand>
</feature>
<feature type="binding site" evidence="1">
    <location>
        <position position="87"/>
    </location>
    <ligand>
        <name>[4Fe-4S] cluster</name>
        <dbReference type="ChEBI" id="CHEBI:49883"/>
    </ligand>
</feature>
<feature type="binding site" evidence="1">
    <location>
        <position position="212"/>
    </location>
    <ligand>
        <name>S-adenosyl-L-methionine</name>
        <dbReference type="ChEBI" id="CHEBI:59789"/>
    </ligand>
</feature>
<feature type="binding site" evidence="1">
    <location>
        <position position="241"/>
    </location>
    <ligand>
        <name>S-adenosyl-L-methionine</name>
        <dbReference type="ChEBI" id="CHEBI:59789"/>
    </ligand>
</feature>
<feature type="binding site" evidence="1">
    <location>
        <position position="262"/>
    </location>
    <ligand>
        <name>S-adenosyl-L-methionine</name>
        <dbReference type="ChEBI" id="CHEBI:59789"/>
    </ligand>
</feature>
<feature type="binding site" evidence="1">
    <location>
        <position position="307"/>
    </location>
    <ligand>
        <name>S-adenosyl-L-methionine</name>
        <dbReference type="ChEBI" id="CHEBI:59789"/>
    </ligand>
</feature>